<evidence type="ECO:0000250" key="1">
    <source>
        <dbReference type="UniProtKB" id="P51681"/>
    </source>
</evidence>
<evidence type="ECO:0000250" key="2">
    <source>
        <dbReference type="UniProtKB" id="Q9XT76"/>
    </source>
</evidence>
<evidence type="ECO:0000255" key="3"/>
<evidence type="ECO:0000255" key="4">
    <source>
        <dbReference type="PROSITE-ProRule" id="PRU00521"/>
    </source>
</evidence>
<evidence type="ECO:0000305" key="5"/>
<accession>P56440</accession>
<accession>O02778</accession>
<proteinExistence type="evidence at transcript level"/>
<reference key="1">
    <citation type="journal article" date="1997" name="Proc. Natl. Acad. Sci. U.S.A.">
        <title>Differential utilization of CCR5 by macrophage and T cell tropic simian immunodeficiency virus strains.</title>
        <authorList>
            <person name="Edinger A.L."/>
            <person name="Amedee A."/>
            <person name="Miller K."/>
            <person name="Doranz B.J."/>
            <person name="Endres M."/>
            <person name="Sharron M."/>
            <person name="Samson M."/>
            <person name="Lu Z.-H."/>
            <person name="Clements J.E."/>
            <person name="Murphey-Corb M."/>
            <person name="Peiper S.C."/>
            <person name="Parmentier M."/>
            <person name="Broder C.C."/>
            <person name="Doms R.W."/>
        </authorList>
    </citation>
    <scope>NUCLEOTIDE SEQUENCE [GENOMIC DNA]</scope>
</reference>
<reference key="2">
    <citation type="submission" date="1997-03" db="EMBL/GenBank/DDBJ databases">
        <title>The Pan troglodytes CCR5 homologue supports in vitro cell fusion with macrophage-tropic HIV-1 envelope gp120.</title>
        <authorList>
            <person name="Zimmerman P.A."/>
            <person name="Buckler-White A."/>
            <person name="Alkhatib G."/>
        </authorList>
    </citation>
    <scope>NUCLEOTIDE SEQUENCE [GENOMIC DNA]</scope>
</reference>
<reference key="3">
    <citation type="journal article" date="1997" name="AIDS Res. Hum. Retroviruses">
        <title>HIV type 1 subtypes, coreceptor usage, and CCR5 polymorphism.</title>
        <authorList>
            <person name="Zhang L."/>
            <person name="Carruthers C.D."/>
            <person name="He T."/>
            <person name="Huang Y."/>
            <person name="Cao Y."/>
            <person name="Wang G."/>
            <person name="Hahn B."/>
            <person name="Ho D.D."/>
        </authorList>
    </citation>
    <scope>NUCLEOTIDE SEQUENCE [MRNA]</scope>
</reference>
<reference key="4">
    <citation type="journal article" date="1997" name="AIDS Res. Hum. Retroviruses">
        <title>Sequence of chemokine receptor gene CCR5 in chimpanzees, a natural HIV type 1 host.</title>
        <authorList>
            <person name="Zacharova V."/>
            <person name="Zachar V."/>
            <person name="Goustin A.S."/>
        </authorList>
    </citation>
    <scope>NUCLEOTIDE SEQUENCE [GENOMIC DNA]</scope>
</reference>
<reference key="5">
    <citation type="journal article" date="1997" name="AIDS Res. Hum. Retroviruses">
        <title>Chimpanzee CXCR4 and CCR5 act as coreceptors for HIV type 1.</title>
        <authorList>
            <person name="Pretet J.-L."/>
            <person name="Zerbib A.C."/>
            <person name="Girard M."/>
            <person name="Guillet J.-G."/>
            <person name="Butor C."/>
        </authorList>
    </citation>
    <scope>NUCLEOTIDE SEQUENCE [MRNA]</scope>
</reference>
<reference key="6">
    <citation type="journal article" date="1999" name="Mol. Biol. Evol.">
        <title>Sequence evolution of the CCR5 chemokine receptor gene in primates.</title>
        <authorList>
            <person name="Zhang Y.-W."/>
            <person name="Ryder O.A."/>
            <person name="Zhang Y.-P."/>
        </authorList>
    </citation>
    <scope>NUCLEOTIDE SEQUENCE [GENOMIC DNA]</scope>
</reference>
<name>CCR5_PANTR</name>
<keyword id="KW-1003">Cell membrane</keyword>
<keyword id="KW-1015">Disulfide bond</keyword>
<keyword id="KW-0297">G-protein coupled receptor</keyword>
<keyword id="KW-0325">Glycoprotein</keyword>
<keyword id="KW-0449">Lipoprotein</keyword>
<keyword id="KW-0472">Membrane</keyword>
<keyword id="KW-0564">Palmitate</keyword>
<keyword id="KW-0597">Phosphoprotein</keyword>
<keyword id="KW-0675">Receptor</keyword>
<keyword id="KW-1185">Reference proteome</keyword>
<keyword id="KW-0765">Sulfation</keyword>
<keyword id="KW-0807">Transducer</keyword>
<keyword id="KW-0812">Transmembrane</keyword>
<keyword id="KW-1133">Transmembrane helix</keyword>
<feature type="chain" id="PRO_0000069272" description="C-C chemokine receptor type 5">
    <location>
        <begin position="1"/>
        <end position="352"/>
    </location>
</feature>
<feature type="topological domain" description="Extracellular" evidence="3">
    <location>
        <begin position="1"/>
        <end position="30"/>
    </location>
</feature>
<feature type="transmembrane region" description="Helical; Name=1" evidence="3">
    <location>
        <begin position="31"/>
        <end position="58"/>
    </location>
</feature>
<feature type="topological domain" description="Cytoplasmic" evidence="3">
    <location>
        <begin position="59"/>
        <end position="68"/>
    </location>
</feature>
<feature type="transmembrane region" description="Helical; Name=2" evidence="3">
    <location>
        <begin position="69"/>
        <end position="89"/>
    </location>
</feature>
<feature type="topological domain" description="Extracellular" evidence="3">
    <location>
        <begin position="90"/>
        <end position="102"/>
    </location>
</feature>
<feature type="transmembrane region" description="Helical; Name=3" evidence="3">
    <location>
        <begin position="103"/>
        <end position="124"/>
    </location>
</feature>
<feature type="topological domain" description="Cytoplasmic" evidence="3">
    <location>
        <begin position="125"/>
        <end position="141"/>
    </location>
</feature>
<feature type="transmembrane region" description="Helical; Name=4" evidence="3">
    <location>
        <begin position="142"/>
        <end position="166"/>
    </location>
</feature>
<feature type="topological domain" description="Extracellular" evidence="3">
    <location>
        <begin position="167"/>
        <end position="198"/>
    </location>
</feature>
<feature type="transmembrane region" description="Helical; Name=5" evidence="3">
    <location>
        <begin position="199"/>
        <end position="218"/>
    </location>
</feature>
<feature type="topological domain" description="Cytoplasmic" evidence="3">
    <location>
        <begin position="219"/>
        <end position="235"/>
    </location>
</feature>
<feature type="transmembrane region" description="Helical; Name=6" evidence="3">
    <location>
        <begin position="236"/>
        <end position="260"/>
    </location>
</feature>
<feature type="topological domain" description="Extracellular" evidence="3">
    <location>
        <begin position="261"/>
        <end position="277"/>
    </location>
</feature>
<feature type="transmembrane region" description="Helical; Name=7" evidence="3">
    <location>
        <begin position="278"/>
        <end position="301"/>
    </location>
</feature>
<feature type="topological domain" description="Cytoplasmic" evidence="3">
    <location>
        <begin position="302"/>
        <end position="352"/>
    </location>
</feature>
<feature type="modified residue" description="Sulfotyrosine" evidence="1">
    <location>
        <position position="3"/>
    </location>
</feature>
<feature type="modified residue" description="Sulfotyrosine" evidence="3">
    <location>
        <position position="10"/>
    </location>
</feature>
<feature type="modified residue" description="Sulfotyrosine" evidence="3">
    <location>
        <position position="14"/>
    </location>
</feature>
<feature type="modified residue" description="Sulfotyrosine" evidence="3">
    <location>
        <position position="15"/>
    </location>
</feature>
<feature type="modified residue" description="Phosphoserine; by BARK1" evidence="1">
    <location>
        <position position="336"/>
    </location>
</feature>
<feature type="modified residue" description="Phosphoserine; by BARK1" evidence="1">
    <location>
        <position position="337"/>
    </location>
</feature>
<feature type="modified residue" description="Phosphoserine; by BARK1" evidence="1">
    <location>
        <position position="342"/>
    </location>
</feature>
<feature type="modified residue" description="Phosphoserine; by BARK1" evidence="1">
    <location>
        <position position="349"/>
    </location>
</feature>
<feature type="lipid moiety-binding region" description="S-palmitoyl cysteine" evidence="1">
    <location>
        <position position="321"/>
    </location>
</feature>
<feature type="lipid moiety-binding region" description="S-palmitoyl cysteine" evidence="1">
    <location>
        <position position="323"/>
    </location>
</feature>
<feature type="lipid moiety-binding region" description="S-palmitoyl cysteine" evidence="1">
    <location>
        <position position="324"/>
    </location>
</feature>
<feature type="glycosylation site" description="O-linked (GalNAc...) serine" evidence="1">
    <location>
        <position position="6"/>
    </location>
</feature>
<feature type="glycosylation site" description="O-linked (GalNAc...) serine" evidence="1">
    <location>
        <position position="7"/>
    </location>
</feature>
<feature type="disulfide bond" evidence="1">
    <location>
        <begin position="20"/>
        <end position="269"/>
    </location>
</feature>
<feature type="disulfide bond" evidence="4">
    <location>
        <begin position="101"/>
        <end position="178"/>
    </location>
</feature>
<feature type="sequence conflict" description="In Ref. 1; AAB62557." evidence="5" ref="1">
    <original>T</original>
    <variation>S</variation>
    <location>
        <position position="123"/>
    </location>
</feature>
<sequence>MDYQVSSPIYDIDYYTSEPCQKINVKQIAARLLPPLYSLVFIFGFVGNMLVILILINCKRLKSMTDIYLLNLAISDLFFLLTVPFWAHYAAAQWDFGNTMCQLLTGLYFIGFFSGIFFIILLTIDRYLAIVHAVFALKARTVTFGVVTSVITWVVAVFASLPGIIFTRSQKEGLHYTCSSHFPYSQYQFWKNFQTLKIVILGLVLPLLVMVICYSGILKTLLRCRNEKKRHRAVRLIFTIMIVYFLFWAPYNIVLLLNTFQEFFGLNNCSSSNRLDQAMQVTETLGMTHCCINPIIYAFVGEKFRNYLLVFFQKHIAKRFCKCCSIFQQEAPERASSVYTRSTGEQEISVGL</sequence>
<gene>
    <name type="primary">CCR5</name>
    <name type="synonym">CMKBR5</name>
</gene>
<comment type="function">
    <text evidence="1">Receptor for a number of inflammatory CC-chemokines including CCL3/MIP-1-alpha, CCL4/MIP-1-beta and RANTES and subsequently transduces a signal by increasing the intracellular calcium ion level. May play a role in the control of granulocytic lineage proliferation or differentiation. Participates in T-lymphocyte migration to the infection site by acting as a chemotactic receptor.</text>
</comment>
<comment type="subunit">
    <text evidence="1">Interacts with PRAF2. Efficient ligand binding to CCL3/MIP-1alpha and CCL4/MIP-1beta requires sulfation, O-glycosylation and sialic acid modifications. Glycosylation on Ser-6 is required for efficient binding of CCL4. Interacts with GRK2. Interacts with ARRB1 and ARRB2. Interacts with CNIH4. Interacts with S100A4; this interaction stimulates T-lymphocyte chemotaxis.</text>
</comment>
<comment type="subcellular location">
    <subcellularLocation>
        <location evidence="2">Cell membrane</location>
        <topology evidence="2">Multi-pass membrane protein</topology>
    </subcellularLocation>
</comment>
<comment type="PTM">
    <text evidence="1">Sulfated on at least 2 of the N-terminal tyrosines. Sulfation is required for efficient binding of the chemokines, CCL3 and CCL4 (By similarity).</text>
</comment>
<comment type="PTM">
    <text evidence="1">Palmitoylation in the C-terminal is important for cell surface expression.</text>
</comment>
<comment type="PTM">
    <text evidence="1">Phosphorylation on serine residues in the C-terminal is stimulated by binding CC chemokines especially by APO-RANTES.</text>
</comment>
<comment type="PTM">
    <text evidence="1">O-glycosylated, but not N-glycosylated. Ser-6 appears to be the major site even if Ser-7 may be also O-glycosylated. Also sialylated glycans present which contribute to chemokine binding. Thr-16 and Ser-17 may also be glycosylated and, if so, with small moieties such as a T-antigen.</text>
</comment>
<comment type="similarity">
    <text evidence="4">Belongs to the G-protein coupled receptor 1 family.</text>
</comment>
<dbReference type="EMBL" id="AF005663">
    <property type="protein sequence ID" value="AAB62557.1"/>
    <property type="molecule type" value="Genomic_DNA"/>
</dbReference>
<dbReference type="EMBL" id="U94329">
    <property type="protein sequence ID" value="AAB58446.1"/>
    <property type="molecule type" value="Genomic_DNA"/>
</dbReference>
<dbReference type="EMBL" id="AF011542">
    <property type="protein sequence ID" value="AAB65742.1"/>
    <property type="molecule type" value="mRNA"/>
</dbReference>
<dbReference type="EMBL" id="U97666">
    <property type="protein sequence ID" value="AAC51670.1"/>
    <property type="molecule type" value="Genomic_DNA"/>
</dbReference>
<dbReference type="EMBL" id="AF011540">
    <property type="protein sequence ID" value="AAB65740.1"/>
    <property type="molecule type" value="mRNA"/>
</dbReference>
<dbReference type="EMBL" id="U89797">
    <property type="protein sequence ID" value="AAC03717.1"/>
    <property type="molecule type" value="mRNA"/>
</dbReference>
<dbReference type="EMBL" id="AF177894">
    <property type="protein sequence ID" value="AAK43377.1"/>
    <property type="molecule type" value="Genomic_DNA"/>
</dbReference>
<dbReference type="RefSeq" id="NP_001009046.1">
    <property type="nucleotide sequence ID" value="NM_001009046.1"/>
</dbReference>
<dbReference type="RefSeq" id="XP_009443593.1">
    <property type="nucleotide sequence ID" value="XM_009445318.2"/>
</dbReference>
<dbReference type="RefSeq" id="XP_063661146.1">
    <property type="nucleotide sequence ID" value="XM_063805076.1"/>
</dbReference>
<dbReference type="BMRB" id="P56440"/>
<dbReference type="SMR" id="P56440"/>
<dbReference type="FunCoup" id="P56440">
    <property type="interactions" value="1047"/>
</dbReference>
<dbReference type="STRING" id="9598.ENSPTRP00000025599"/>
<dbReference type="GlyCosmos" id="P56440">
    <property type="glycosylation" value="2 sites, No reported glycans"/>
</dbReference>
<dbReference type="PaxDb" id="9598-ENSPTRP00000025599"/>
<dbReference type="Ensembl" id="ENSPTRT00000027757.6">
    <property type="protein sequence ID" value="ENSPTRP00000025599.5"/>
    <property type="gene ID" value="ENSPTRG00000014848.7"/>
</dbReference>
<dbReference type="GeneID" id="450128"/>
<dbReference type="CTD" id="1234"/>
<dbReference type="VGNC" id="VGNC:11366">
    <property type="gene designation" value="CCR5"/>
</dbReference>
<dbReference type="eggNOG" id="KOG3656">
    <property type="taxonomic scope" value="Eukaryota"/>
</dbReference>
<dbReference type="GeneTree" id="ENSGT01020000230359"/>
<dbReference type="HOGENOM" id="CLU_009579_8_3_1"/>
<dbReference type="InParanoid" id="P56440"/>
<dbReference type="OMA" id="HYTCSPH"/>
<dbReference type="OrthoDB" id="10654at9604"/>
<dbReference type="TreeFam" id="TF330966"/>
<dbReference type="Proteomes" id="UP000002277">
    <property type="component" value="Chromosome 3"/>
</dbReference>
<dbReference type="Bgee" id="ENSPTRG00000014848">
    <property type="expression patterns" value="Expressed in cortex of kidney and 6 other cell types or tissues"/>
</dbReference>
<dbReference type="GO" id="GO:0005737">
    <property type="term" value="C:cytoplasm"/>
    <property type="evidence" value="ECO:0000318"/>
    <property type="project" value="GO_Central"/>
</dbReference>
<dbReference type="GO" id="GO:0005768">
    <property type="term" value="C:endosome"/>
    <property type="evidence" value="ECO:0007669"/>
    <property type="project" value="Ensembl"/>
</dbReference>
<dbReference type="GO" id="GO:0009897">
    <property type="term" value="C:external side of plasma membrane"/>
    <property type="evidence" value="ECO:0000250"/>
    <property type="project" value="UniProtKB"/>
</dbReference>
<dbReference type="GO" id="GO:0003779">
    <property type="term" value="F:actin binding"/>
    <property type="evidence" value="ECO:0007669"/>
    <property type="project" value="Ensembl"/>
</dbReference>
<dbReference type="GO" id="GO:0016493">
    <property type="term" value="F:C-C chemokine receptor activity"/>
    <property type="evidence" value="ECO:0000250"/>
    <property type="project" value="UniProtKB"/>
</dbReference>
<dbReference type="GO" id="GO:0071791">
    <property type="term" value="F:chemokine (C-C motif) ligand 5 binding"/>
    <property type="evidence" value="ECO:0000318"/>
    <property type="project" value="GO_Central"/>
</dbReference>
<dbReference type="GO" id="GO:0042802">
    <property type="term" value="F:identical protein binding"/>
    <property type="evidence" value="ECO:0007669"/>
    <property type="project" value="Ensembl"/>
</dbReference>
<dbReference type="GO" id="GO:0019722">
    <property type="term" value="P:calcium-mediated signaling"/>
    <property type="evidence" value="ECO:0000318"/>
    <property type="project" value="GO_Central"/>
</dbReference>
<dbReference type="GO" id="GO:0060326">
    <property type="term" value="P:cell chemotaxis"/>
    <property type="evidence" value="ECO:0000318"/>
    <property type="project" value="GO_Central"/>
</dbReference>
<dbReference type="GO" id="GO:0007267">
    <property type="term" value="P:cell-cell signaling"/>
    <property type="evidence" value="ECO:0007669"/>
    <property type="project" value="Ensembl"/>
</dbReference>
<dbReference type="GO" id="GO:0071222">
    <property type="term" value="P:cellular response to lipopolysaccharide"/>
    <property type="evidence" value="ECO:0007669"/>
    <property type="project" value="Ensembl"/>
</dbReference>
<dbReference type="GO" id="GO:0006955">
    <property type="term" value="P:immune response"/>
    <property type="evidence" value="ECO:0000318"/>
    <property type="project" value="GO_Central"/>
</dbReference>
<dbReference type="GO" id="GO:0006954">
    <property type="term" value="P:inflammatory response"/>
    <property type="evidence" value="ECO:0000318"/>
    <property type="project" value="GO_Central"/>
</dbReference>
<dbReference type="GO" id="GO:0000165">
    <property type="term" value="P:MAPK cascade"/>
    <property type="evidence" value="ECO:0007669"/>
    <property type="project" value="Ensembl"/>
</dbReference>
<dbReference type="GO" id="GO:0007204">
    <property type="term" value="P:positive regulation of cytosolic calcium ion concentration"/>
    <property type="evidence" value="ECO:0000318"/>
    <property type="project" value="GO_Central"/>
</dbReference>
<dbReference type="GO" id="GO:0014808">
    <property type="term" value="P:release of sequestered calcium ion into cytosol by sarcoplasmic reticulum"/>
    <property type="evidence" value="ECO:0007669"/>
    <property type="project" value="Ensembl"/>
</dbReference>
<dbReference type="GO" id="GO:0070723">
    <property type="term" value="P:response to cholesterol"/>
    <property type="evidence" value="ECO:0007669"/>
    <property type="project" value="Ensembl"/>
</dbReference>
<dbReference type="CDD" id="cd15184">
    <property type="entry name" value="7tmA_CCR5_CCR2"/>
    <property type="match status" value="1"/>
</dbReference>
<dbReference type="FunFam" id="1.20.1070.10:FF:000026">
    <property type="entry name" value="C-C chemokine receptor type 5"/>
    <property type="match status" value="1"/>
</dbReference>
<dbReference type="Gene3D" id="1.20.1070.10">
    <property type="entry name" value="Rhodopsin 7-helix transmembrane proteins"/>
    <property type="match status" value="1"/>
</dbReference>
<dbReference type="InterPro" id="IPR050119">
    <property type="entry name" value="CCR1-9-like"/>
</dbReference>
<dbReference type="InterPro" id="IPR002240">
    <property type="entry name" value="Chemokine_CCR5"/>
</dbReference>
<dbReference type="InterPro" id="IPR000355">
    <property type="entry name" value="Chemokine_rcpt"/>
</dbReference>
<dbReference type="InterPro" id="IPR000276">
    <property type="entry name" value="GPCR_Rhodpsn"/>
</dbReference>
<dbReference type="InterPro" id="IPR017452">
    <property type="entry name" value="GPCR_Rhodpsn_7TM"/>
</dbReference>
<dbReference type="PANTHER" id="PTHR10489:SF686">
    <property type="entry name" value="C-C CHEMOKINE RECEPTOR TYPE 5"/>
    <property type="match status" value="1"/>
</dbReference>
<dbReference type="PANTHER" id="PTHR10489">
    <property type="entry name" value="CELL ADHESION MOLECULE"/>
    <property type="match status" value="1"/>
</dbReference>
<dbReference type="Pfam" id="PF00001">
    <property type="entry name" value="7tm_1"/>
    <property type="match status" value="1"/>
</dbReference>
<dbReference type="PRINTS" id="PR00657">
    <property type="entry name" value="CCCHEMOKINER"/>
</dbReference>
<dbReference type="PRINTS" id="PR01110">
    <property type="entry name" value="CHEMOKINER5"/>
</dbReference>
<dbReference type="PRINTS" id="PR00237">
    <property type="entry name" value="GPCRRHODOPSN"/>
</dbReference>
<dbReference type="SUPFAM" id="SSF81321">
    <property type="entry name" value="Family A G protein-coupled receptor-like"/>
    <property type="match status" value="1"/>
</dbReference>
<dbReference type="PROSITE" id="PS00237">
    <property type="entry name" value="G_PROTEIN_RECEP_F1_1"/>
    <property type="match status" value="1"/>
</dbReference>
<dbReference type="PROSITE" id="PS50262">
    <property type="entry name" value="G_PROTEIN_RECEP_F1_2"/>
    <property type="match status" value="1"/>
</dbReference>
<organism>
    <name type="scientific">Pan troglodytes</name>
    <name type="common">Chimpanzee</name>
    <dbReference type="NCBI Taxonomy" id="9598"/>
    <lineage>
        <taxon>Eukaryota</taxon>
        <taxon>Metazoa</taxon>
        <taxon>Chordata</taxon>
        <taxon>Craniata</taxon>
        <taxon>Vertebrata</taxon>
        <taxon>Euteleostomi</taxon>
        <taxon>Mammalia</taxon>
        <taxon>Eutheria</taxon>
        <taxon>Euarchontoglires</taxon>
        <taxon>Primates</taxon>
        <taxon>Haplorrhini</taxon>
        <taxon>Catarrhini</taxon>
        <taxon>Hominidae</taxon>
        <taxon>Pan</taxon>
    </lineage>
</organism>
<protein>
    <recommendedName>
        <fullName>C-C chemokine receptor type 5</fullName>
        <shortName>C-C CKR-5</shortName>
        <shortName>CC-CKR-5</shortName>
        <shortName>CCR-5</shortName>
        <shortName>CCR5</shortName>
    </recommendedName>
    <cdAntigenName>CD195</cdAntigenName>
</protein>